<reference key="1">
    <citation type="submission" date="2007-10" db="EMBL/GenBank/DDBJ databases">
        <title>Complete sequence of Desulfococcus oleovorans Hxd3.</title>
        <authorList>
            <consortium name="US DOE Joint Genome Institute"/>
            <person name="Copeland A."/>
            <person name="Lucas S."/>
            <person name="Lapidus A."/>
            <person name="Barry K."/>
            <person name="Glavina del Rio T."/>
            <person name="Dalin E."/>
            <person name="Tice H."/>
            <person name="Pitluck S."/>
            <person name="Kiss H."/>
            <person name="Brettin T."/>
            <person name="Bruce D."/>
            <person name="Detter J.C."/>
            <person name="Han C."/>
            <person name="Schmutz J."/>
            <person name="Larimer F."/>
            <person name="Land M."/>
            <person name="Hauser L."/>
            <person name="Kyrpides N."/>
            <person name="Kim E."/>
            <person name="Wawrik B."/>
            <person name="Richardson P."/>
        </authorList>
    </citation>
    <scope>NUCLEOTIDE SEQUENCE [LARGE SCALE GENOMIC DNA]</scope>
    <source>
        <strain>DSM 6200 / JCM 39069 / Hxd3</strain>
    </source>
</reference>
<proteinExistence type="inferred from homology"/>
<keyword id="KW-0479">Metal-binding</keyword>
<keyword id="KW-1185">Reference proteome</keyword>
<keyword id="KW-0687">Ribonucleoprotein</keyword>
<keyword id="KW-0689">Ribosomal protein</keyword>
<keyword id="KW-0694">RNA-binding</keyword>
<keyword id="KW-0699">rRNA-binding</keyword>
<keyword id="KW-0862">Zinc</keyword>
<gene>
    <name evidence="1" type="primary">rpsZ</name>
    <name evidence="1" type="synonym">rpsN</name>
    <name type="ordered locus">Dole_0721</name>
</gene>
<comment type="function">
    <text evidence="1">Binds 16S rRNA, required for the assembly of 30S particles and may also be responsible for determining the conformation of the 16S rRNA at the A site.</text>
</comment>
<comment type="cofactor">
    <cofactor evidence="1">
        <name>Zn(2+)</name>
        <dbReference type="ChEBI" id="CHEBI:29105"/>
    </cofactor>
    <text evidence="1">Binds 1 zinc ion per subunit.</text>
</comment>
<comment type="subunit">
    <text evidence="1">Part of the 30S ribosomal subunit. Contacts proteins S3 and S10.</text>
</comment>
<comment type="similarity">
    <text evidence="1">Belongs to the universal ribosomal protein uS14 family. Zinc-binding uS14 subfamily.</text>
</comment>
<protein>
    <recommendedName>
        <fullName evidence="1">Small ribosomal subunit protein uS14</fullName>
    </recommendedName>
    <alternativeName>
        <fullName evidence="2">30S ribosomal protein S14 type Z</fullName>
    </alternativeName>
</protein>
<dbReference type="EMBL" id="CP000859">
    <property type="protein sequence ID" value="ABW66531.1"/>
    <property type="molecule type" value="Genomic_DNA"/>
</dbReference>
<dbReference type="RefSeq" id="WP_012174149.1">
    <property type="nucleotide sequence ID" value="NC_009943.1"/>
</dbReference>
<dbReference type="SMR" id="A8ZV70"/>
<dbReference type="STRING" id="96561.Dole_0721"/>
<dbReference type="KEGG" id="dol:Dole_0721"/>
<dbReference type="eggNOG" id="COG0199">
    <property type="taxonomic scope" value="Bacteria"/>
</dbReference>
<dbReference type="HOGENOM" id="CLU_139869_3_0_7"/>
<dbReference type="OrthoDB" id="9810484at2"/>
<dbReference type="Proteomes" id="UP000008561">
    <property type="component" value="Chromosome"/>
</dbReference>
<dbReference type="GO" id="GO:0005737">
    <property type="term" value="C:cytoplasm"/>
    <property type="evidence" value="ECO:0007669"/>
    <property type="project" value="UniProtKB-ARBA"/>
</dbReference>
<dbReference type="GO" id="GO:0015935">
    <property type="term" value="C:small ribosomal subunit"/>
    <property type="evidence" value="ECO:0007669"/>
    <property type="project" value="TreeGrafter"/>
</dbReference>
<dbReference type="GO" id="GO:0019843">
    <property type="term" value="F:rRNA binding"/>
    <property type="evidence" value="ECO:0007669"/>
    <property type="project" value="UniProtKB-UniRule"/>
</dbReference>
<dbReference type="GO" id="GO:0003735">
    <property type="term" value="F:structural constituent of ribosome"/>
    <property type="evidence" value="ECO:0007669"/>
    <property type="project" value="InterPro"/>
</dbReference>
<dbReference type="GO" id="GO:0008270">
    <property type="term" value="F:zinc ion binding"/>
    <property type="evidence" value="ECO:0007669"/>
    <property type="project" value="UniProtKB-UniRule"/>
</dbReference>
<dbReference type="GO" id="GO:0006412">
    <property type="term" value="P:translation"/>
    <property type="evidence" value="ECO:0007669"/>
    <property type="project" value="UniProtKB-UniRule"/>
</dbReference>
<dbReference type="FunFam" id="4.10.830.10:FF:000001">
    <property type="entry name" value="30S ribosomal protein S14 type Z"/>
    <property type="match status" value="1"/>
</dbReference>
<dbReference type="Gene3D" id="4.10.830.10">
    <property type="entry name" value="30s Ribosomal Protein S14, Chain N"/>
    <property type="match status" value="1"/>
</dbReference>
<dbReference type="HAMAP" id="MF_01364_B">
    <property type="entry name" value="Ribosomal_uS14_2_B"/>
    <property type="match status" value="1"/>
</dbReference>
<dbReference type="InterPro" id="IPR001209">
    <property type="entry name" value="Ribosomal_uS14"/>
</dbReference>
<dbReference type="InterPro" id="IPR023053">
    <property type="entry name" value="Ribosomal_uS14_bact"/>
</dbReference>
<dbReference type="InterPro" id="IPR018271">
    <property type="entry name" value="Ribosomal_uS14_CS"/>
</dbReference>
<dbReference type="InterPro" id="IPR043140">
    <property type="entry name" value="Ribosomal_uS14_sf"/>
</dbReference>
<dbReference type="NCBIfam" id="NF005974">
    <property type="entry name" value="PRK08061.1"/>
    <property type="match status" value="1"/>
</dbReference>
<dbReference type="PANTHER" id="PTHR19836">
    <property type="entry name" value="30S RIBOSOMAL PROTEIN S14"/>
    <property type="match status" value="1"/>
</dbReference>
<dbReference type="PANTHER" id="PTHR19836:SF19">
    <property type="entry name" value="SMALL RIBOSOMAL SUBUNIT PROTEIN US14M"/>
    <property type="match status" value="1"/>
</dbReference>
<dbReference type="Pfam" id="PF00253">
    <property type="entry name" value="Ribosomal_S14"/>
    <property type="match status" value="1"/>
</dbReference>
<dbReference type="SUPFAM" id="SSF57716">
    <property type="entry name" value="Glucocorticoid receptor-like (DNA-binding domain)"/>
    <property type="match status" value="1"/>
</dbReference>
<dbReference type="PROSITE" id="PS00527">
    <property type="entry name" value="RIBOSOMAL_S14"/>
    <property type="match status" value="1"/>
</dbReference>
<name>RS14Z_DESOH</name>
<accession>A8ZV70</accession>
<sequence>MARTSLVVKASREPKFSARKYNRCPICGRPRAFIRKFGICRICFRSMASMGKLPGVTKSSW</sequence>
<feature type="chain" id="PRO_1000143897" description="Small ribosomal subunit protein uS14">
    <location>
        <begin position="1"/>
        <end position="61"/>
    </location>
</feature>
<feature type="binding site" evidence="1">
    <location>
        <position position="24"/>
    </location>
    <ligand>
        <name>Zn(2+)</name>
        <dbReference type="ChEBI" id="CHEBI:29105"/>
    </ligand>
</feature>
<feature type="binding site" evidence="1">
    <location>
        <position position="27"/>
    </location>
    <ligand>
        <name>Zn(2+)</name>
        <dbReference type="ChEBI" id="CHEBI:29105"/>
    </ligand>
</feature>
<feature type="binding site" evidence="1">
    <location>
        <position position="40"/>
    </location>
    <ligand>
        <name>Zn(2+)</name>
        <dbReference type="ChEBI" id="CHEBI:29105"/>
    </ligand>
</feature>
<feature type="binding site" evidence="1">
    <location>
        <position position="43"/>
    </location>
    <ligand>
        <name>Zn(2+)</name>
        <dbReference type="ChEBI" id="CHEBI:29105"/>
    </ligand>
</feature>
<organism>
    <name type="scientific">Desulfosudis oleivorans (strain DSM 6200 / JCM 39069 / Hxd3)</name>
    <name type="common">Desulfococcus oleovorans</name>
    <dbReference type="NCBI Taxonomy" id="96561"/>
    <lineage>
        <taxon>Bacteria</taxon>
        <taxon>Pseudomonadati</taxon>
        <taxon>Thermodesulfobacteriota</taxon>
        <taxon>Desulfobacteria</taxon>
        <taxon>Desulfobacterales</taxon>
        <taxon>Desulfosudaceae</taxon>
        <taxon>Desulfosudis</taxon>
    </lineage>
</organism>
<evidence type="ECO:0000255" key="1">
    <source>
        <dbReference type="HAMAP-Rule" id="MF_01364"/>
    </source>
</evidence>
<evidence type="ECO:0000305" key="2"/>